<name>PGK_ACTP2</name>
<feature type="chain" id="PRO_1000057952" description="Phosphoglycerate kinase">
    <location>
        <begin position="1"/>
        <end position="391"/>
    </location>
</feature>
<feature type="binding site" evidence="1">
    <location>
        <begin position="21"/>
        <end position="23"/>
    </location>
    <ligand>
        <name>substrate</name>
    </ligand>
</feature>
<feature type="binding site" evidence="1">
    <location>
        <position position="36"/>
    </location>
    <ligand>
        <name>substrate</name>
    </ligand>
</feature>
<feature type="binding site" evidence="1">
    <location>
        <begin position="59"/>
        <end position="62"/>
    </location>
    <ligand>
        <name>substrate</name>
    </ligand>
</feature>
<feature type="binding site" evidence="1">
    <location>
        <position position="114"/>
    </location>
    <ligand>
        <name>substrate</name>
    </ligand>
</feature>
<feature type="binding site" evidence="1">
    <location>
        <position position="147"/>
    </location>
    <ligand>
        <name>substrate</name>
    </ligand>
</feature>
<feature type="binding site" evidence="1">
    <location>
        <position position="198"/>
    </location>
    <ligand>
        <name>ATP</name>
        <dbReference type="ChEBI" id="CHEBI:30616"/>
    </ligand>
</feature>
<feature type="binding site" evidence="1">
    <location>
        <position position="315"/>
    </location>
    <ligand>
        <name>ATP</name>
        <dbReference type="ChEBI" id="CHEBI:30616"/>
    </ligand>
</feature>
<feature type="binding site" evidence="1">
    <location>
        <begin position="344"/>
        <end position="347"/>
    </location>
    <ligand>
        <name>ATP</name>
        <dbReference type="ChEBI" id="CHEBI:30616"/>
    </ligand>
</feature>
<proteinExistence type="inferred from homology"/>
<sequence>MSVIKMADLDLAGKRLFIRADLNVPVKDGKVTSDARIRATIPTLKLALQKGAKVMVTSHLGRPTEGVFEEANSLQPVVDYLNASDLGVPVRLVRDYLDGVEVAENEIVVLENVRINKGEKKNDPELAKKYAALCDVFVMDAFGTAHRAEGSTYGVAEYAPVACAGPLLAAELDALGKALKEPQRPMLAIVGGSKVSTKLTVLDSLSKIADQLIVGGGIANTFIAAEGHPVGKSLYEADLIPEAKRLAAATNIPVPVDVRVGTEFSEIAPATEKAVSEVQADESIFDIGDKSAEELANIIKSAKTILWNGPVGVFEFPNFRKGTEVISNAIAEATANGAFSIAGGGDTLAAIDLFGIADKISYISTGGGAFLEFVEGKVLPAVEILEKRANG</sequence>
<gene>
    <name evidence="1" type="primary">pgk</name>
    <name type="ordered locus">APL_1251</name>
</gene>
<keyword id="KW-0067">ATP-binding</keyword>
<keyword id="KW-0963">Cytoplasm</keyword>
<keyword id="KW-0324">Glycolysis</keyword>
<keyword id="KW-0418">Kinase</keyword>
<keyword id="KW-0547">Nucleotide-binding</keyword>
<keyword id="KW-1185">Reference proteome</keyword>
<keyword id="KW-0808">Transferase</keyword>
<comment type="catalytic activity">
    <reaction evidence="1">
        <text>(2R)-3-phosphoglycerate + ATP = (2R)-3-phospho-glyceroyl phosphate + ADP</text>
        <dbReference type="Rhea" id="RHEA:14801"/>
        <dbReference type="ChEBI" id="CHEBI:30616"/>
        <dbReference type="ChEBI" id="CHEBI:57604"/>
        <dbReference type="ChEBI" id="CHEBI:58272"/>
        <dbReference type="ChEBI" id="CHEBI:456216"/>
        <dbReference type="EC" id="2.7.2.3"/>
    </reaction>
</comment>
<comment type="pathway">
    <text evidence="1">Carbohydrate degradation; glycolysis; pyruvate from D-glyceraldehyde 3-phosphate: step 2/5.</text>
</comment>
<comment type="subunit">
    <text evidence="1">Monomer.</text>
</comment>
<comment type="subcellular location">
    <subcellularLocation>
        <location evidence="1">Cytoplasm</location>
    </subcellularLocation>
</comment>
<comment type="similarity">
    <text evidence="1">Belongs to the phosphoglycerate kinase family.</text>
</comment>
<organism>
    <name type="scientific">Actinobacillus pleuropneumoniae serotype 5b (strain L20)</name>
    <dbReference type="NCBI Taxonomy" id="416269"/>
    <lineage>
        <taxon>Bacteria</taxon>
        <taxon>Pseudomonadati</taxon>
        <taxon>Pseudomonadota</taxon>
        <taxon>Gammaproteobacteria</taxon>
        <taxon>Pasteurellales</taxon>
        <taxon>Pasteurellaceae</taxon>
        <taxon>Actinobacillus</taxon>
    </lineage>
</organism>
<dbReference type="EC" id="2.7.2.3" evidence="1"/>
<dbReference type="EMBL" id="CP000569">
    <property type="protein sequence ID" value="ABN74337.1"/>
    <property type="molecule type" value="Genomic_DNA"/>
</dbReference>
<dbReference type="RefSeq" id="WP_005612697.1">
    <property type="nucleotide sequence ID" value="NC_009053.1"/>
</dbReference>
<dbReference type="SMR" id="A3N1Q1"/>
<dbReference type="STRING" id="416269.APL_1251"/>
<dbReference type="EnsemblBacteria" id="ABN74337">
    <property type="protein sequence ID" value="ABN74337"/>
    <property type="gene ID" value="APL_1251"/>
</dbReference>
<dbReference type="KEGG" id="apl:APL_1251"/>
<dbReference type="eggNOG" id="COG0126">
    <property type="taxonomic scope" value="Bacteria"/>
</dbReference>
<dbReference type="HOGENOM" id="CLU_025427_0_2_6"/>
<dbReference type="UniPathway" id="UPA00109">
    <property type="reaction ID" value="UER00185"/>
</dbReference>
<dbReference type="Proteomes" id="UP000001432">
    <property type="component" value="Chromosome"/>
</dbReference>
<dbReference type="GO" id="GO:0005829">
    <property type="term" value="C:cytosol"/>
    <property type="evidence" value="ECO:0007669"/>
    <property type="project" value="TreeGrafter"/>
</dbReference>
<dbReference type="GO" id="GO:0043531">
    <property type="term" value="F:ADP binding"/>
    <property type="evidence" value="ECO:0007669"/>
    <property type="project" value="TreeGrafter"/>
</dbReference>
<dbReference type="GO" id="GO:0005524">
    <property type="term" value="F:ATP binding"/>
    <property type="evidence" value="ECO:0007669"/>
    <property type="project" value="UniProtKB-KW"/>
</dbReference>
<dbReference type="GO" id="GO:0004618">
    <property type="term" value="F:phosphoglycerate kinase activity"/>
    <property type="evidence" value="ECO:0007669"/>
    <property type="project" value="UniProtKB-UniRule"/>
</dbReference>
<dbReference type="GO" id="GO:0006094">
    <property type="term" value="P:gluconeogenesis"/>
    <property type="evidence" value="ECO:0007669"/>
    <property type="project" value="TreeGrafter"/>
</dbReference>
<dbReference type="GO" id="GO:0006096">
    <property type="term" value="P:glycolytic process"/>
    <property type="evidence" value="ECO:0007669"/>
    <property type="project" value="UniProtKB-UniRule"/>
</dbReference>
<dbReference type="FunFam" id="3.40.50.1260:FF:000001">
    <property type="entry name" value="Phosphoglycerate kinase"/>
    <property type="match status" value="1"/>
</dbReference>
<dbReference type="FunFam" id="3.40.50.1260:FF:000002">
    <property type="entry name" value="Phosphoglycerate kinase"/>
    <property type="match status" value="1"/>
</dbReference>
<dbReference type="Gene3D" id="3.40.50.1260">
    <property type="entry name" value="Phosphoglycerate kinase, N-terminal domain"/>
    <property type="match status" value="2"/>
</dbReference>
<dbReference type="HAMAP" id="MF_00145">
    <property type="entry name" value="Phosphoglyc_kinase"/>
    <property type="match status" value="1"/>
</dbReference>
<dbReference type="InterPro" id="IPR001576">
    <property type="entry name" value="Phosphoglycerate_kinase"/>
</dbReference>
<dbReference type="InterPro" id="IPR015824">
    <property type="entry name" value="Phosphoglycerate_kinase_N"/>
</dbReference>
<dbReference type="InterPro" id="IPR036043">
    <property type="entry name" value="Phosphoglycerate_kinase_sf"/>
</dbReference>
<dbReference type="PANTHER" id="PTHR11406">
    <property type="entry name" value="PHOSPHOGLYCERATE KINASE"/>
    <property type="match status" value="1"/>
</dbReference>
<dbReference type="PANTHER" id="PTHR11406:SF23">
    <property type="entry name" value="PHOSPHOGLYCERATE KINASE 1, CHLOROPLASTIC-RELATED"/>
    <property type="match status" value="1"/>
</dbReference>
<dbReference type="Pfam" id="PF00162">
    <property type="entry name" value="PGK"/>
    <property type="match status" value="1"/>
</dbReference>
<dbReference type="PIRSF" id="PIRSF000724">
    <property type="entry name" value="Pgk"/>
    <property type="match status" value="1"/>
</dbReference>
<dbReference type="PRINTS" id="PR00477">
    <property type="entry name" value="PHGLYCKINASE"/>
</dbReference>
<dbReference type="SUPFAM" id="SSF53748">
    <property type="entry name" value="Phosphoglycerate kinase"/>
    <property type="match status" value="1"/>
</dbReference>
<protein>
    <recommendedName>
        <fullName evidence="1">Phosphoglycerate kinase</fullName>
        <ecNumber evidence="1">2.7.2.3</ecNumber>
    </recommendedName>
</protein>
<accession>A3N1Q1</accession>
<reference key="1">
    <citation type="journal article" date="2008" name="J. Bacteriol.">
        <title>The complete genome sequence of Actinobacillus pleuropneumoniae L20 (serotype 5b).</title>
        <authorList>
            <person name="Foote S.J."/>
            <person name="Bosse J.T."/>
            <person name="Bouevitch A.B."/>
            <person name="Langford P.R."/>
            <person name="Young N.M."/>
            <person name="Nash J.H.E."/>
        </authorList>
    </citation>
    <scope>NUCLEOTIDE SEQUENCE [LARGE SCALE GENOMIC DNA]</scope>
    <source>
        <strain>L20</strain>
    </source>
</reference>
<evidence type="ECO:0000255" key="1">
    <source>
        <dbReference type="HAMAP-Rule" id="MF_00145"/>
    </source>
</evidence>